<keyword id="KW-0131">Cell cycle</keyword>
<keyword id="KW-0132">Cell division</keyword>
<keyword id="KW-0997">Cell inner membrane</keyword>
<keyword id="KW-1003">Cell membrane</keyword>
<keyword id="KW-0133">Cell shape</keyword>
<keyword id="KW-0961">Cell wall biogenesis/degradation</keyword>
<keyword id="KW-0328">Glycosyltransferase</keyword>
<keyword id="KW-0472">Membrane</keyword>
<keyword id="KW-0573">Peptidoglycan synthesis</keyword>
<keyword id="KW-0808">Transferase</keyword>
<protein>
    <recommendedName>
        <fullName evidence="1">UDP-N-acetylglucosamine--N-acetylmuramyl-(pentapeptide) pyrophosphoryl-undecaprenol N-acetylglucosamine transferase</fullName>
        <ecNumber evidence="1">2.4.1.227</ecNumber>
    </recommendedName>
    <alternativeName>
        <fullName evidence="1">Undecaprenyl-PP-MurNAc-pentapeptide-UDPGlcNAc GlcNAc transferase</fullName>
    </alternativeName>
</protein>
<organism>
    <name type="scientific">Francisella tularensis subsp. holarctica (strain OSU18)</name>
    <dbReference type="NCBI Taxonomy" id="393011"/>
    <lineage>
        <taxon>Bacteria</taxon>
        <taxon>Pseudomonadati</taxon>
        <taxon>Pseudomonadota</taxon>
        <taxon>Gammaproteobacteria</taxon>
        <taxon>Thiotrichales</taxon>
        <taxon>Francisellaceae</taxon>
        <taxon>Francisella</taxon>
    </lineage>
</organism>
<gene>
    <name evidence="1" type="primary">murG</name>
    <name type="ordered locus">FTH_1373</name>
</gene>
<accession>Q0BL37</accession>
<proteinExistence type="inferred from homology"/>
<sequence length="371" mass="40829">MSLENKNIIITAGGTGGHIYPALAIAELLRQNKANVTWVGTPNSMEASIVPEYFNIQFIKSSGVRRKGIIKKITFPLKLAYNTLKSRSLLKKLKANLVIGFGGYVSGPICLAAAQINIPVIIHEQNAKIGLTNRILAKFATTICLAFEIENLHKQFSSKQLAKTKIVGNPVRKDIVALNDKARIYTDSSTLKILVLGGSQGAKAINEIIPKLIQKSNEQGINIKVWHQTGKLSLEETKDAYKDISQNHIKDIAAFIDDMAIAYNWADLVICRAGALTVSECAIAGLPAIFIPLPSAVDDHQFFNAQNIVNNNAGFCLRQQQMTLENLLAIIKPLNQDRSKLEQMSKMAKKTLIKNSSEQILDCVKKILNNK</sequence>
<dbReference type="EC" id="2.4.1.227" evidence="1"/>
<dbReference type="EMBL" id="CP000437">
    <property type="protein sequence ID" value="ABI83197.1"/>
    <property type="molecule type" value="Genomic_DNA"/>
</dbReference>
<dbReference type="RefSeq" id="WP_003016681.1">
    <property type="nucleotide sequence ID" value="NC_017463.1"/>
</dbReference>
<dbReference type="SMR" id="Q0BL37"/>
<dbReference type="CAZy" id="GT28">
    <property type="family name" value="Glycosyltransferase Family 28"/>
</dbReference>
<dbReference type="KEGG" id="fth:FTH_1373"/>
<dbReference type="UniPathway" id="UPA00219"/>
<dbReference type="GO" id="GO:0005886">
    <property type="term" value="C:plasma membrane"/>
    <property type="evidence" value="ECO:0007669"/>
    <property type="project" value="UniProtKB-SubCell"/>
</dbReference>
<dbReference type="GO" id="GO:0051991">
    <property type="term" value="F:UDP-N-acetyl-D-glucosamine:N-acetylmuramoyl-L-alanyl-D-glutamyl-meso-2,6-diaminopimelyl-D-alanyl-D-alanine-diphosphoundecaprenol 4-beta-N-acetylglucosaminlytransferase activity"/>
    <property type="evidence" value="ECO:0007669"/>
    <property type="project" value="RHEA"/>
</dbReference>
<dbReference type="GO" id="GO:0050511">
    <property type="term" value="F:undecaprenyldiphospho-muramoylpentapeptide beta-N-acetylglucosaminyltransferase activity"/>
    <property type="evidence" value="ECO:0007669"/>
    <property type="project" value="UniProtKB-UniRule"/>
</dbReference>
<dbReference type="GO" id="GO:0005975">
    <property type="term" value="P:carbohydrate metabolic process"/>
    <property type="evidence" value="ECO:0007669"/>
    <property type="project" value="InterPro"/>
</dbReference>
<dbReference type="GO" id="GO:0051301">
    <property type="term" value="P:cell division"/>
    <property type="evidence" value="ECO:0007669"/>
    <property type="project" value="UniProtKB-KW"/>
</dbReference>
<dbReference type="GO" id="GO:0071555">
    <property type="term" value="P:cell wall organization"/>
    <property type="evidence" value="ECO:0007669"/>
    <property type="project" value="UniProtKB-KW"/>
</dbReference>
<dbReference type="GO" id="GO:0030259">
    <property type="term" value="P:lipid glycosylation"/>
    <property type="evidence" value="ECO:0007669"/>
    <property type="project" value="UniProtKB-UniRule"/>
</dbReference>
<dbReference type="GO" id="GO:0009252">
    <property type="term" value="P:peptidoglycan biosynthetic process"/>
    <property type="evidence" value="ECO:0007669"/>
    <property type="project" value="UniProtKB-UniRule"/>
</dbReference>
<dbReference type="GO" id="GO:0008360">
    <property type="term" value="P:regulation of cell shape"/>
    <property type="evidence" value="ECO:0007669"/>
    <property type="project" value="UniProtKB-KW"/>
</dbReference>
<dbReference type="CDD" id="cd03785">
    <property type="entry name" value="GT28_MurG"/>
    <property type="match status" value="1"/>
</dbReference>
<dbReference type="Gene3D" id="3.40.50.2000">
    <property type="entry name" value="Glycogen Phosphorylase B"/>
    <property type="match status" value="2"/>
</dbReference>
<dbReference type="HAMAP" id="MF_00033">
    <property type="entry name" value="MurG"/>
    <property type="match status" value="1"/>
</dbReference>
<dbReference type="InterPro" id="IPR006009">
    <property type="entry name" value="GlcNAc_MurG"/>
</dbReference>
<dbReference type="InterPro" id="IPR007235">
    <property type="entry name" value="Glyco_trans_28_C"/>
</dbReference>
<dbReference type="InterPro" id="IPR004276">
    <property type="entry name" value="GlycoTrans_28_N"/>
</dbReference>
<dbReference type="NCBIfam" id="TIGR01133">
    <property type="entry name" value="murG"/>
    <property type="match status" value="1"/>
</dbReference>
<dbReference type="PANTHER" id="PTHR21015:SF22">
    <property type="entry name" value="GLYCOSYLTRANSFERASE"/>
    <property type="match status" value="1"/>
</dbReference>
<dbReference type="PANTHER" id="PTHR21015">
    <property type="entry name" value="UDP-N-ACETYLGLUCOSAMINE--N-ACETYLMURAMYL-(PENTAPEPTIDE) PYROPHOSPHORYL-UNDECAPRENOL N-ACETYLGLUCOSAMINE TRANSFERASE 1"/>
    <property type="match status" value="1"/>
</dbReference>
<dbReference type="Pfam" id="PF04101">
    <property type="entry name" value="Glyco_tran_28_C"/>
    <property type="match status" value="1"/>
</dbReference>
<dbReference type="Pfam" id="PF03033">
    <property type="entry name" value="Glyco_transf_28"/>
    <property type="match status" value="1"/>
</dbReference>
<dbReference type="SUPFAM" id="SSF53756">
    <property type="entry name" value="UDP-Glycosyltransferase/glycogen phosphorylase"/>
    <property type="match status" value="1"/>
</dbReference>
<comment type="function">
    <text evidence="1">Cell wall formation. Catalyzes the transfer of a GlcNAc subunit on undecaprenyl-pyrophosphoryl-MurNAc-pentapeptide (lipid intermediate I) to form undecaprenyl-pyrophosphoryl-MurNAc-(pentapeptide)GlcNAc (lipid intermediate II).</text>
</comment>
<comment type="catalytic activity">
    <reaction evidence="1">
        <text>di-trans,octa-cis-undecaprenyl diphospho-N-acetyl-alpha-D-muramoyl-L-alanyl-D-glutamyl-meso-2,6-diaminopimeloyl-D-alanyl-D-alanine + UDP-N-acetyl-alpha-D-glucosamine = di-trans,octa-cis-undecaprenyl diphospho-[N-acetyl-alpha-D-glucosaminyl-(1-&gt;4)]-N-acetyl-alpha-D-muramoyl-L-alanyl-D-glutamyl-meso-2,6-diaminopimeloyl-D-alanyl-D-alanine + UDP + H(+)</text>
        <dbReference type="Rhea" id="RHEA:31227"/>
        <dbReference type="ChEBI" id="CHEBI:15378"/>
        <dbReference type="ChEBI" id="CHEBI:57705"/>
        <dbReference type="ChEBI" id="CHEBI:58223"/>
        <dbReference type="ChEBI" id="CHEBI:61387"/>
        <dbReference type="ChEBI" id="CHEBI:61388"/>
        <dbReference type="EC" id="2.4.1.227"/>
    </reaction>
</comment>
<comment type="pathway">
    <text evidence="1">Cell wall biogenesis; peptidoglycan biosynthesis.</text>
</comment>
<comment type="subcellular location">
    <subcellularLocation>
        <location evidence="1">Cell inner membrane</location>
        <topology evidence="1">Peripheral membrane protein</topology>
        <orientation evidence="1">Cytoplasmic side</orientation>
    </subcellularLocation>
</comment>
<comment type="similarity">
    <text evidence="1">Belongs to the glycosyltransferase 28 family. MurG subfamily.</text>
</comment>
<name>MURG_FRATO</name>
<feature type="chain" id="PRO_1000002649" description="UDP-N-acetylglucosamine--N-acetylmuramyl-(pentapeptide) pyrophosphoryl-undecaprenol N-acetylglucosamine transferase">
    <location>
        <begin position="1"/>
        <end position="371"/>
    </location>
</feature>
<feature type="binding site" evidence="1">
    <location>
        <begin position="15"/>
        <end position="17"/>
    </location>
    <ligand>
        <name>UDP-N-acetyl-alpha-D-glucosamine</name>
        <dbReference type="ChEBI" id="CHEBI:57705"/>
    </ligand>
</feature>
<feature type="binding site" evidence="1">
    <location>
        <position position="126"/>
    </location>
    <ligand>
        <name>UDP-N-acetyl-alpha-D-glucosamine</name>
        <dbReference type="ChEBI" id="CHEBI:57705"/>
    </ligand>
</feature>
<feature type="binding site" evidence="1">
    <location>
        <position position="172"/>
    </location>
    <ligand>
        <name>UDP-N-acetyl-alpha-D-glucosamine</name>
        <dbReference type="ChEBI" id="CHEBI:57705"/>
    </ligand>
</feature>
<feature type="binding site" evidence="1">
    <location>
        <position position="199"/>
    </location>
    <ligand>
        <name>UDP-N-acetyl-alpha-D-glucosamine</name>
        <dbReference type="ChEBI" id="CHEBI:57705"/>
    </ligand>
</feature>
<feature type="binding site" evidence="1">
    <location>
        <position position="256"/>
    </location>
    <ligand>
        <name>UDP-N-acetyl-alpha-D-glucosamine</name>
        <dbReference type="ChEBI" id="CHEBI:57705"/>
    </ligand>
</feature>
<feature type="binding site" evidence="1">
    <location>
        <begin position="275"/>
        <end position="280"/>
    </location>
    <ligand>
        <name>UDP-N-acetyl-alpha-D-glucosamine</name>
        <dbReference type="ChEBI" id="CHEBI:57705"/>
    </ligand>
</feature>
<feature type="binding site" evidence="1">
    <location>
        <position position="301"/>
    </location>
    <ligand>
        <name>UDP-N-acetyl-alpha-D-glucosamine</name>
        <dbReference type="ChEBI" id="CHEBI:57705"/>
    </ligand>
</feature>
<evidence type="ECO:0000255" key="1">
    <source>
        <dbReference type="HAMAP-Rule" id="MF_00033"/>
    </source>
</evidence>
<reference key="1">
    <citation type="journal article" date="2006" name="J. Bacteriol.">
        <title>Chromosome rearrangement and diversification of Francisella tularensis revealed by the type B (OSU18) genome sequence.</title>
        <authorList>
            <person name="Petrosino J.F."/>
            <person name="Xiang Q."/>
            <person name="Karpathy S.E."/>
            <person name="Jiang H."/>
            <person name="Yerrapragada S."/>
            <person name="Liu Y."/>
            <person name="Gioia J."/>
            <person name="Hemphill L."/>
            <person name="Gonzalez A."/>
            <person name="Raghavan T.M."/>
            <person name="Uzman A."/>
            <person name="Fox G.E."/>
            <person name="Highlander S."/>
            <person name="Reichard M."/>
            <person name="Morton R.J."/>
            <person name="Clinkenbeard K.D."/>
            <person name="Weinstock G.M."/>
        </authorList>
    </citation>
    <scope>NUCLEOTIDE SEQUENCE [LARGE SCALE GENOMIC DNA]</scope>
    <source>
        <strain>OSU18</strain>
    </source>
</reference>